<organism>
    <name type="scientific">Rattus norvegicus</name>
    <name type="common">Rat</name>
    <dbReference type="NCBI Taxonomy" id="10116"/>
    <lineage>
        <taxon>Eukaryota</taxon>
        <taxon>Metazoa</taxon>
        <taxon>Chordata</taxon>
        <taxon>Craniata</taxon>
        <taxon>Vertebrata</taxon>
        <taxon>Euteleostomi</taxon>
        <taxon>Mammalia</taxon>
        <taxon>Eutheria</taxon>
        <taxon>Euarchontoglires</taxon>
        <taxon>Glires</taxon>
        <taxon>Rodentia</taxon>
        <taxon>Myomorpha</taxon>
        <taxon>Muroidea</taxon>
        <taxon>Muridae</taxon>
        <taxon>Murinae</taxon>
        <taxon>Rattus</taxon>
    </lineage>
</organism>
<feature type="chain" id="PRO_0000280271" description="PCNA-interacting partner">
    <location>
        <begin position="1"/>
        <end position="573"/>
    </location>
</feature>
<feature type="region of interest" description="Disordered" evidence="4">
    <location>
        <begin position="463"/>
        <end position="511"/>
    </location>
</feature>
<feature type="compositionally biased region" description="Basic and acidic residues" evidence="4">
    <location>
        <begin position="474"/>
        <end position="494"/>
    </location>
</feature>
<feature type="compositionally biased region" description="Basic residues" evidence="4">
    <location>
        <begin position="495"/>
        <end position="504"/>
    </location>
</feature>
<feature type="splice variant" id="VSP_023598" description="In isoform 2." evidence="6">
    <location>
        <begin position="1"/>
        <end position="81"/>
    </location>
</feature>
<sequence>MAVLNQMSVLDMIKAFRRNWRAHCNSERTTLCGPDSMLLALQLSMAENNKQHHGEFTVCLSDVLLTWKYFLHEKLNLPIENMKVVDHYEDIRKTYDDFLKNSNTLDLIDVYKKCSIMTSNCEKHMISSIQLRDFLSGTECAVNDENNPHSPASPVKCSQNDKQVRLLAKKIFLSYLSLLVNSKNDLALAQILNTPDRGLGREAFTNLKHAAREKQLSMFLMATSFIRTLELGGKGYAPPPSDPLWAHVKGLSAFVNFIDKLNEILGEVPNPSLAGGRILSAIRTQLIKGHSSGEPFYKAVEEVVQDLNLRIKNIINSQEGVTVSATNISPVPPKSFAINHDTAYCGRDAVKILLVLLDEDAASAPTRNKAELLYNDQSTAPHGGASVLTLFRSPTQVKSTPVKPLRERIHTSLQAEKNKQMRQTLIRSQFACTYKDDCIMSKSKWNVNSSSKPLSALRLENDVSEGAQPSVGKARLETSSENVHVDRSKDDKGPRKSTKRKLAKSKQPGVREDIHCDQGDELYQPKNVKILKVPSDSHRKAGGKLAPGARGNRCTTKDKLIPGQTKLTRFFML</sequence>
<comment type="function">
    <text evidence="1 5">Required to suppress inappropriate homologous recombination, thereby playing a central role DNA repair and in the maintenance of genomic stability. Antagonizes homologous recombination by interfering with the formation of the RAD51-DNA homologous recombination structure. Positively regulate the poly(ADP-ribosyl)ation activity of PARP1; however such function may be indirect (By similarity). Binds single-strand DNA and poly(A) homopolymers.</text>
</comment>
<comment type="subunit">
    <text evidence="2 3">Interacts with RAD51 and PCNA. Interacts with PARP1 (By similarity). Interacts with TASOR (By similarity).</text>
</comment>
<comment type="subcellular location">
    <subcellularLocation>
        <location evidence="5">Cytoplasm</location>
    </subcellularLocation>
    <subcellularLocation>
        <location evidence="5">Nucleus</location>
    </subcellularLocation>
    <text evidence="1">Localizes to chromatin in response to S phase arrest but not in mitosis. Targeted to chromatin via its interaction with PCNA (By similarity).</text>
</comment>
<comment type="alternative products">
    <event type="alternative splicing"/>
    <isoform>
        <id>Q9EQ10-1</id>
        <name>1</name>
        <name>AROM-p64</name>
        <sequence type="displayed"/>
    </isoform>
    <isoform>
        <id>Q9EQ10-2</id>
        <name>2</name>
        <sequence type="described" ref="VSP_023598"/>
    </isoform>
</comment>
<comment type="tissue specificity">
    <text evidence="5">Present in testis (at protein level). Expressed in testis, gastrointestinal tract (jejunum, ileum, and colon) and immune system (thymus and spleen). Weakly expressed in lung, kidney, pituitary gland and muscle.</text>
</comment>
<comment type="miscellaneous">
    <text>The gene encoding Arom is located in the opposite strand of the gene encoding MCH.</text>
</comment>
<comment type="similarity">
    <text evidence="7">Belongs to the PARI family.</text>
</comment>
<accession>Q9EQ10</accession>
<keyword id="KW-0025">Alternative splicing</keyword>
<keyword id="KW-0963">Cytoplasm</keyword>
<keyword id="KW-0227">DNA damage</keyword>
<keyword id="KW-0234">DNA repair</keyword>
<keyword id="KW-0238">DNA-binding</keyword>
<keyword id="KW-0539">Nucleus</keyword>
<keyword id="KW-1185">Reference proteome</keyword>
<name>PARI_RAT</name>
<protein>
    <recommendedName>
        <fullName>PCNA-interacting partner</fullName>
        <shortName>PARI</shortName>
    </recommendedName>
    <alternativeName>
        <fullName>Antisense RNA overlapping MCH gene protein</fullName>
        <shortName>AROM</shortName>
    </alternativeName>
    <alternativeName>
        <fullName>PARP-1 binding protein</fullName>
    </alternativeName>
    <alternativeName>
        <fullName>PARP1-binding protein</fullName>
        <shortName>PARPBP</shortName>
    </alternativeName>
</protein>
<gene>
    <name type="primary">Parpbp</name>
    <name type="synonym">Arom</name>
    <name type="synonym">Pari</name>
</gene>
<evidence type="ECO:0000250" key="1"/>
<evidence type="ECO:0000250" key="2">
    <source>
        <dbReference type="UniProtKB" id="Q6IRT3"/>
    </source>
</evidence>
<evidence type="ECO:0000250" key="3">
    <source>
        <dbReference type="UniProtKB" id="Q9NWS1"/>
    </source>
</evidence>
<evidence type="ECO:0000256" key="4">
    <source>
        <dbReference type="SAM" id="MobiDB-lite"/>
    </source>
</evidence>
<evidence type="ECO:0000269" key="5">
    <source>
    </source>
</evidence>
<evidence type="ECO:0000303" key="6">
    <source>
    </source>
</evidence>
<evidence type="ECO:0000305" key="7"/>
<reference key="1">
    <citation type="journal article" date="2000" name="J. Biol. Chem.">
        <title>The AROM gene, spliced mRNAs encoding new DNA/RNA-binding proteins are transcribed from the opposite strand of the melanin-concentrating hormone gene in mammals.</title>
        <authorList>
            <person name="Borsu L."/>
            <person name="Presse F."/>
            <person name="Nahon J.-L."/>
        </authorList>
    </citation>
    <scope>NUCLEOTIDE SEQUENCE [MRNA] (ISOFORMS 1 AND 2)</scope>
    <scope>FUNCTION</scope>
    <scope>SUBCELLULAR LOCATION</scope>
    <scope>TISSUE SPECIFICITY</scope>
    <source>
        <strain>Wistar</strain>
    </source>
</reference>
<dbReference type="EMBL" id="AF303035">
    <property type="protein sequence ID" value="AAG42418.1"/>
    <property type="molecule type" value="mRNA"/>
</dbReference>
<dbReference type="RefSeq" id="NP_001160148.1">
    <molecule id="Q9EQ10-2"/>
    <property type="nucleotide sequence ID" value="NM_001166676.2"/>
</dbReference>
<dbReference type="RefSeq" id="NP_001388166.1">
    <molecule id="Q9EQ10-1"/>
    <property type="nucleotide sequence ID" value="NM_001401237.1"/>
</dbReference>
<dbReference type="RefSeq" id="XP_006241250.1">
    <property type="nucleotide sequence ID" value="XM_006241188.3"/>
</dbReference>
<dbReference type="RefSeq" id="XP_006241251.1">
    <molecule id="Q9EQ10-1"/>
    <property type="nucleotide sequence ID" value="XM_006241189.5"/>
</dbReference>
<dbReference type="RefSeq" id="XP_006241252.1">
    <property type="nucleotide sequence ID" value="XM_006241190.3"/>
</dbReference>
<dbReference type="SMR" id="Q9EQ10"/>
<dbReference type="FunCoup" id="Q9EQ10">
    <property type="interactions" value="876"/>
</dbReference>
<dbReference type="STRING" id="10116.ENSRNOP00000006249"/>
<dbReference type="PhosphoSitePlus" id="Q9EQ10"/>
<dbReference type="PaxDb" id="10116-ENSRNOP00000006249"/>
<dbReference type="Ensembl" id="ENSRNOT00000065899.4">
    <molecule id="Q9EQ10-2"/>
    <property type="protein sequence ID" value="ENSRNOP00000060859.1"/>
    <property type="gene ID" value="ENSRNOG00000004682.7"/>
</dbReference>
<dbReference type="GeneID" id="100310874"/>
<dbReference type="KEGG" id="rno:100310874"/>
<dbReference type="UCSC" id="RGD:2314264">
    <molecule id="Q9EQ10-1"/>
    <property type="organism name" value="rat"/>
</dbReference>
<dbReference type="AGR" id="RGD:2314264"/>
<dbReference type="CTD" id="55010"/>
<dbReference type="RGD" id="2314264">
    <property type="gene designation" value="Parpbp"/>
</dbReference>
<dbReference type="VEuPathDB" id="HostDB:ENSRNOG00000004682"/>
<dbReference type="eggNOG" id="ENOG502QR2U">
    <property type="taxonomic scope" value="Eukaryota"/>
</dbReference>
<dbReference type="GeneTree" id="ENSGT00390000006088"/>
<dbReference type="HOGENOM" id="CLU_034470_1_0_1"/>
<dbReference type="InParanoid" id="Q9EQ10"/>
<dbReference type="PhylomeDB" id="Q9EQ10"/>
<dbReference type="TreeFam" id="TF332230"/>
<dbReference type="PRO" id="PR:Q9EQ10"/>
<dbReference type="Proteomes" id="UP000002494">
    <property type="component" value="Chromosome 7"/>
</dbReference>
<dbReference type="Bgee" id="ENSRNOG00000004682">
    <property type="expression patterns" value="Expressed in testis and 13 other cell types or tissues"/>
</dbReference>
<dbReference type="ExpressionAtlas" id="Q9EQ10">
    <property type="expression patterns" value="baseline and differential"/>
</dbReference>
<dbReference type="GO" id="GO:0000785">
    <property type="term" value="C:chromatin"/>
    <property type="evidence" value="ECO:0000250"/>
    <property type="project" value="UniProtKB"/>
</dbReference>
<dbReference type="GO" id="GO:0005737">
    <property type="term" value="C:cytoplasm"/>
    <property type="evidence" value="ECO:0007669"/>
    <property type="project" value="UniProtKB-SubCell"/>
</dbReference>
<dbReference type="GO" id="GO:0005634">
    <property type="term" value="C:nucleus"/>
    <property type="evidence" value="ECO:0007669"/>
    <property type="project" value="UniProtKB-SubCell"/>
</dbReference>
<dbReference type="GO" id="GO:0003677">
    <property type="term" value="F:DNA binding"/>
    <property type="evidence" value="ECO:0007669"/>
    <property type="project" value="UniProtKB-KW"/>
</dbReference>
<dbReference type="GO" id="GO:0006281">
    <property type="term" value="P:DNA repair"/>
    <property type="evidence" value="ECO:0007669"/>
    <property type="project" value="UniProtKB-KW"/>
</dbReference>
<dbReference type="GO" id="GO:2000042">
    <property type="term" value="P:negative regulation of double-strand break repair via homologous recombination"/>
    <property type="evidence" value="ECO:0000250"/>
    <property type="project" value="UniProtKB"/>
</dbReference>
<dbReference type="FunFam" id="1.10.486.10:FF:000004">
    <property type="entry name" value="PCNA-interacting partner isoform X3"/>
    <property type="match status" value="1"/>
</dbReference>
<dbReference type="Gene3D" id="1.10.486.10">
    <property type="entry name" value="PCRA, domain 4"/>
    <property type="match status" value="1"/>
</dbReference>
<dbReference type="InterPro" id="IPR027417">
    <property type="entry name" value="P-loop_NTPase"/>
</dbReference>
<dbReference type="InterPro" id="IPR038932">
    <property type="entry name" value="PARPBP"/>
</dbReference>
<dbReference type="PANTHER" id="PTHR32121">
    <property type="entry name" value="PCNA-INTERACTING PARTNER"/>
    <property type="match status" value="1"/>
</dbReference>
<dbReference type="PANTHER" id="PTHR32121:SF0">
    <property type="entry name" value="PCNA-INTERACTING PARTNER"/>
    <property type="match status" value="1"/>
</dbReference>
<dbReference type="SUPFAM" id="SSF52540">
    <property type="entry name" value="P-loop containing nucleoside triphosphate hydrolases"/>
    <property type="match status" value="1"/>
</dbReference>
<proteinExistence type="evidence at protein level"/>